<protein>
    <recommendedName>
        <fullName>Dihydroorotate dehydrogenase (quinone)</fullName>
        <ecNumber>1.3.5.2</ecNumber>
    </recommendedName>
    <alternativeName>
        <fullName>DHOdehase</fullName>
        <shortName>DHOD</shortName>
        <shortName>DHODase</shortName>
    </alternativeName>
    <alternativeName>
        <fullName>Dihydroorotate oxidase</fullName>
    </alternativeName>
</protein>
<gene>
    <name type="primary">pyrD</name>
    <name type="ordered locus">ML1293</name>
    <name type="ORF">B2126_F3_143</name>
</gene>
<reference key="1">
    <citation type="submission" date="1994-03" db="EMBL/GenBank/DDBJ databases">
        <authorList>
            <person name="Smith D.R."/>
            <person name="Robison K."/>
        </authorList>
    </citation>
    <scope>NUCLEOTIDE SEQUENCE [GENOMIC DNA]</scope>
</reference>
<reference key="2">
    <citation type="journal article" date="2001" name="Nature">
        <title>Massive gene decay in the leprosy bacillus.</title>
        <authorList>
            <person name="Cole S.T."/>
            <person name="Eiglmeier K."/>
            <person name="Parkhill J."/>
            <person name="James K.D."/>
            <person name="Thomson N.R."/>
            <person name="Wheeler P.R."/>
            <person name="Honore N."/>
            <person name="Garnier T."/>
            <person name="Churcher C.M."/>
            <person name="Harris D.E."/>
            <person name="Mungall K.L."/>
            <person name="Basham D."/>
            <person name="Brown D."/>
            <person name="Chillingworth T."/>
            <person name="Connor R."/>
            <person name="Davies R.M."/>
            <person name="Devlin K."/>
            <person name="Duthoy S."/>
            <person name="Feltwell T."/>
            <person name="Fraser A."/>
            <person name="Hamlin N."/>
            <person name="Holroyd S."/>
            <person name="Hornsby T."/>
            <person name="Jagels K."/>
            <person name="Lacroix C."/>
            <person name="Maclean J."/>
            <person name="Moule S."/>
            <person name="Murphy L.D."/>
            <person name="Oliver K."/>
            <person name="Quail M.A."/>
            <person name="Rajandream M.A."/>
            <person name="Rutherford K.M."/>
            <person name="Rutter S."/>
            <person name="Seeger K."/>
            <person name="Simon S."/>
            <person name="Simmonds M."/>
            <person name="Skelton J."/>
            <person name="Squares R."/>
            <person name="Squares S."/>
            <person name="Stevens K."/>
            <person name="Taylor K."/>
            <person name="Whitehead S."/>
            <person name="Woodward J.R."/>
            <person name="Barrell B.G."/>
        </authorList>
    </citation>
    <scope>NUCLEOTIDE SEQUENCE [LARGE SCALE GENOMIC DNA]</scope>
    <source>
        <strain>TN</strain>
    </source>
</reference>
<accession>P46727</accession>
<dbReference type="EC" id="1.3.5.2"/>
<dbReference type="EMBL" id="U00017">
    <property type="protein sequence ID" value="AAA17221.1"/>
    <property type="status" value="ALT_FRAME"/>
    <property type="molecule type" value="Genomic_DNA"/>
</dbReference>
<dbReference type="EMBL" id="AL583921">
    <property type="protein sequence ID" value="CAC31674.1"/>
    <property type="status" value="ALT_INIT"/>
    <property type="molecule type" value="Genomic_DNA"/>
</dbReference>
<dbReference type="PIR" id="G87070">
    <property type="entry name" value="G87070"/>
</dbReference>
<dbReference type="PIR" id="S72881">
    <property type="entry name" value="S72881"/>
</dbReference>
<dbReference type="RefSeq" id="WP_049769939.1">
    <property type="nucleotide sequence ID" value="NC_002677.1"/>
</dbReference>
<dbReference type="SMR" id="P46727"/>
<dbReference type="STRING" id="272631.gene:17575127"/>
<dbReference type="KEGG" id="mle:ML1293"/>
<dbReference type="Leproma" id="ML1293"/>
<dbReference type="eggNOG" id="COG0167">
    <property type="taxonomic scope" value="Bacteria"/>
</dbReference>
<dbReference type="HOGENOM" id="CLU_013640_2_0_11"/>
<dbReference type="UniPathway" id="UPA00070">
    <property type="reaction ID" value="UER00946"/>
</dbReference>
<dbReference type="Proteomes" id="UP000000806">
    <property type="component" value="Chromosome"/>
</dbReference>
<dbReference type="GO" id="GO:0005737">
    <property type="term" value="C:cytoplasm"/>
    <property type="evidence" value="ECO:0007669"/>
    <property type="project" value="InterPro"/>
</dbReference>
<dbReference type="GO" id="GO:0005886">
    <property type="term" value="C:plasma membrane"/>
    <property type="evidence" value="ECO:0007669"/>
    <property type="project" value="UniProtKB-SubCell"/>
</dbReference>
<dbReference type="GO" id="GO:0106430">
    <property type="term" value="F:dihydroorotate dehydrogenase (quinone) activity"/>
    <property type="evidence" value="ECO:0007669"/>
    <property type="project" value="UniProtKB-EC"/>
</dbReference>
<dbReference type="GO" id="GO:0006207">
    <property type="term" value="P:'de novo' pyrimidine nucleobase biosynthetic process"/>
    <property type="evidence" value="ECO:0007669"/>
    <property type="project" value="InterPro"/>
</dbReference>
<dbReference type="GO" id="GO:0044205">
    <property type="term" value="P:'de novo' UMP biosynthetic process"/>
    <property type="evidence" value="ECO:0007669"/>
    <property type="project" value="UniProtKB-UniRule"/>
</dbReference>
<dbReference type="CDD" id="cd04738">
    <property type="entry name" value="DHOD_2_like"/>
    <property type="match status" value="1"/>
</dbReference>
<dbReference type="FunFam" id="3.20.20.70:FF:000123">
    <property type="entry name" value="Dihydroorotate dehydrogenase (quinone)"/>
    <property type="match status" value="1"/>
</dbReference>
<dbReference type="Gene3D" id="3.20.20.70">
    <property type="entry name" value="Aldolase class I"/>
    <property type="match status" value="1"/>
</dbReference>
<dbReference type="HAMAP" id="MF_00225">
    <property type="entry name" value="DHO_dh_type2"/>
    <property type="match status" value="1"/>
</dbReference>
<dbReference type="InterPro" id="IPR013785">
    <property type="entry name" value="Aldolase_TIM"/>
</dbReference>
<dbReference type="InterPro" id="IPR050074">
    <property type="entry name" value="DHO_dehydrogenase"/>
</dbReference>
<dbReference type="InterPro" id="IPR005719">
    <property type="entry name" value="Dihydroorotate_DH_2"/>
</dbReference>
<dbReference type="InterPro" id="IPR005720">
    <property type="entry name" value="Dihydroorotate_DH_cat"/>
</dbReference>
<dbReference type="InterPro" id="IPR001295">
    <property type="entry name" value="Dihydroorotate_DH_CS"/>
</dbReference>
<dbReference type="NCBIfam" id="NF003648">
    <property type="entry name" value="PRK05286.2-1"/>
    <property type="match status" value="1"/>
</dbReference>
<dbReference type="NCBIfam" id="NF003652">
    <property type="entry name" value="PRK05286.2-5"/>
    <property type="match status" value="1"/>
</dbReference>
<dbReference type="NCBIfam" id="TIGR01036">
    <property type="entry name" value="pyrD_sub2"/>
    <property type="match status" value="1"/>
</dbReference>
<dbReference type="PANTHER" id="PTHR48109:SF4">
    <property type="entry name" value="DIHYDROOROTATE DEHYDROGENASE (QUINONE), MITOCHONDRIAL"/>
    <property type="match status" value="1"/>
</dbReference>
<dbReference type="PANTHER" id="PTHR48109">
    <property type="entry name" value="DIHYDROOROTATE DEHYDROGENASE (QUINONE), MITOCHONDRIAL-RELATED"/>
    <property type="match status" value="1"/>
</dbReference>
<dbReference type="Pfam" id="PF01180">
    <property type="entry name" value="DHO_dh"/>
    <property type="match status" value="1"/>
</dbReference>
<dbReference type="SUPFAM" id="SSF51395">
    <property type="entry name" value="FMN-linked oxidoreductases"/>
    <property type="match status" value="1"/>
</dbReference>
<dbReference type="PROSITE" id="PS00911">
    <property type="entry name" value="DHODEHASE_1"/>
    <property type="match status" value="1"/>
</dbReference>
<dbReference type="PROSITE" id="PS00912">
    <property type="entry name" value="DHODEHASE_2"/>
    <property type="match status" value="1"/>
</dbReference>
<comment type="function">
    <text evidence="1">Catalyzes the conversion of dihydroorotate to orotate with quinone as electron acceptor.</text>
</comment>
<comment type="catalytic activity">
    <reaction>
        <text>(S)-dihydroorotate + a quinone = orotate + a quinol</text>
        <dbReference type="Rhea" id="RHEA:30187"/>
        <dbReference type="ChEBI" id="CHEBI:24646"/>
        <dbReference type="ChEBI" id="CHEBI:30839"/>
        <dbReference type="ChEBI" id="CHEBI:30864"/>
        <dbReference type="ChEBI" id="CHEBI:132124"/>
        <dbReference type="EC" id="1.3.5.2"/>
    </reaction>
</comment>
<comment type="cofactor">
    <cofactor evidence="1">
        <name>FMN</name>
        <dbReference type="ChEBI" id="CHEBI:58210"/>
    </cofactor>
    <text evidence="1">Binds 1 FMN per subunit.</text>
</comment>
<comment type="pathway">
    <text>Pyrimidine metabolism; UMP biosynthesis via de novo pathway; orotate from (S)-dihydroorotate (quinone route): step 1/1.</text>
</comment>
<comment type="subunit">
    <text evidence="1">Monomer.</text>
</comment>
<comment type="subcellular location">
    <subcellularLocation>
        <location evidence="1">Cell membrane</location>
        <topology evidence="1">Peripheral membrane protein</topology>
    </subcellularLocation>
</comment>
<comment type="similarity">
    <text evidence="2">Belongs to the dihydroorotate dehydrogenase family. Type 2 subfamily.</text>
</comment>
<comment type="sequence caution" evidence="2">
    <conflict type="frameshift">
        <sequence resource="EMBL-CDS" id="AAA17221"/>
    </conflict>
</comment>
<comment type="sequence caution" evidence="2">
    <conflict type="erroneous initiation">
        <sequence resource="EMBL-CDS" id="CAC31674"/>
    </conflict>
</comment>
<proteinExistence type="inferred from homology"/>
<feature type="chain" id="PRO_0000148455" description="Dihydroorotate dehydrogenase (quinone)">
    <location>
        <begin position="1"/>
        <end position="356"/>
    </location>
</feature>
<feature type="active site" description="Nucleophile" evidence="1">
    <location>
        <position position="179"/>
    </location>
</feature>
<feature type="binding site" evidence="1">
    <location>
        <begin position="66"/>
        <end position="70"/>
    </location>
    <ligand>
        <name>FMN</name>
        <dbReference type="ChEBI" id="CHEBI:58210"/>
    </ligand>
</feature>
<feature type="binding site" evidence="1">
    <location>
        <position position="70"/>
    </location>
    <ligand>
        <name>substrate</name>
    </ligand>
</feature>
<feature type="binding site" evidence="1">
    <location>
        <position position="90"/>
    </location>
    <ligand>
        <name>FMN</name>
        <dbReference type="ChEBI" id="CHEBI:58210"/>
    </ligand>
</feature>
<feature type="binding site" evidence="1">
    <location>
        <begin position="115"/>
        <end position="119"/>
    </location>
    <ligand>
        <name>substrate</name>
    </ligand>
</feature>
<feature type="binding site" evidence="1">
    <location>
        <position position="143"/>
    </location>
    <ligand>
        <name>FMN</name>
        <dbReference type="ChEBI" id="CHEBI:58210"/>
    </ligand>
</feature>
<feature type="binding site" evidence="1">
    <location>
        <position position="176"/>
    </location>
    <ligand>
        <name>FMN</name>
        <dbReference type="ChEBI" id="CHEBI:58210"/>
    </ligand>
</feature>
<feature type="binding site" evidence="1">
    <location>
        <position position="176"/>
    </location>
    <ligand>
        <name>substrate</name>
    </ligand>
</feature>
<feature type="binding site" evidence="1">
    <location>
        <position position="181"/>
    </location>
    <ligand>
        <name>substrate</name>
    </ligand>
</feature>
<feature type="binding site" evidence="1">
    <location>
        <position position="212"/>
    </location>
    <ligand>
        <name>FMN</name>
        <dbReference type="ChEBI" id="CHEBI:58210"/>
    </ligand>
</feature>
<feature type="binding site" evidence="1">
    <location>
        <position position="240"/>
    </location>
    <ligand>
        <name>FMN</name>
        <dbReference type="ChEBI" id="CHEBI:58210"/>
    </ligand>
</feature>
<feature type="binding site" evidence="1">
    <location>
        <begin position="241"/>
        <end position="242"/>
    </location>
    <ligand>
        <name>substrate</name>
    </ligand>
</feature>
<feature type="binding site" evidence="1">
    <location>
        <position position="264"/>
    </location>
    <ligand>
        <name>FMN</name>
        <dbReference type="ChEBI" id="CHEBI:58210"/>
    </ligand>
</feature>
<feature type="binding site" evidence="1">
    <location>
        <position position="293"/>
    </location>
    <ligand>
        <name>FMN</name>
        <dbReference type="ChEBI" id="CHEBI:58210"/>
    </ligand>
</feature>
<feature type="binding site" evidence="1">
    <location>
        <begin position="314"/>
        <end position="315"/>
    </location>
    <ligand>
        <name>FMN</name>
        <dbReference type="ChEBI" id="CHEBI:58210"/>
    </ligand>
</feature>
<evidence type="ECO:0000250" key="1"/>
<evidence type="ECO:0000305" key="2"/>
<keyword id="KW-1003">Cell membrane</keyword>
<keyword id="KW-0285">Flavoprotein</keyword>
<keyword id="KW-0288">FMN</keyword>
<keyword id="KW-0472">Membrane</keyword>
<keyword id="KW-0560">Oxidoreductase</keyword>
<keyword id="KW-0665">Pyrimidine biosynthesis</keyword>
<keyword id="KW-1185">Reference proteome</keyword>
<name>PYRD_MYCLE</name>
<sequence>MYRVVRRLLFLTPPERIHTLVFAMLRCVTSIAVLRRLLRWVLGPTDPVLASTVFGVRFPGPLGLAAGFDKDGMGLLAWGALGFGYAEVGTVTAYPQPGNPAPRMFRLPADRALLNRMGFNNNGAGALAIQLAHHRPEVPIGVNISKTKATPASHTVDDYRASARLVGPLASYLVVNVSSPNTPGLRDLQAVESLRAILLGVLAETSVPVLVKIAPDISDSEIDDITDLAVELRLAGIVATNTTVSRDCLVTPGIDALGAGGISGPPVARRAVEVLRRLYGRVGDRLVLISVGGIETADDAWDRITAGASLLQGYTGFIYGGGFWPKHIHDGIARRLHDGGFASLRDAVGSATAKSE</sequence>
<organism>
    <name type="scientific">Mycobacterium leprae (strain TN)</name>
    <dbReference type="NCBI Taxonomy" id="272631"/>
    <lineage>
        <taxon>Bacteria</taxon>
        <taxon>Bacillati</taxon>
        <taxon>Actinomycetota</taxon>
        <taxon>Actinomycetes</taxon>
        <taxon>Mycobacteriales</taxon>
        <taxon>Mycobacteriaceae</taxon>
        <taxon>Mycobacterium</taxon>
    </lineage>
</organism>